<evidence type="ECO:0000255" key="1">
    <source>
        <dbReference type="HAMAP-Rule" id="MF_01363"/>
    </source>
</evidence>
<evidence type="ECO:0000305" key="2"/>
<comment type="function">
    <text evidence="1">This protein binds to 23S rRNA in the presence of protein L20.</text>
</comment>
<comment type="subunit">
    <text evidence="1">Part of the 50S ribosomal subunit. Contacts protein L20.</text>
</comment>
<comment type="similarity">
    <text evidence="1">Belongs to the bacterial ribosomal protein bL21 family.</text>
</comment>
<reference key="1">
    <citation type="journal article" date="2009" name="PLoS Genet.">
        <title>Organised genome dynamics in the Escherichia coli species results in highly diverse adaptive paths.</title>
        <authorList>
            <person name="Touchon M."/>
            <person name="Hoede C."/>
            <person name="Tenaillon O."/>
            <person name="Barbe V."/>
            <person name="Baeriswyl S."/>
            <person name="Bidet P."/>
            <person name="Bingen E."/>
            <person name="Bonacorsi S."/>
            <person name="Bouchier C."/>
            <person name="Bouvet O."/>
            <person name="Calteau A."/>
            <person name="Chiapello H."/>
            <person name="Clermont O."/>
            <person name="Cruveiller S."/>
            <person name="Danchin A."/>
            <person name="Diard M."/>
            <person name="Dossat C."/>
            <person name="Karoui M.E."/>
            <person name="Frapy E."/>
            <person name="Garry L."/>
            <person name="Ghigo J.M."/>
            <person name="Gilles A.M."/>
            <person name="Johnson J."/>
            <person name="Le Bouguenec C."/>
            <person name="Lescat M."/>
            <person name="Mangenot S."/>
            <person name="Martinez-Jehanne V."/>
            <person name="Matic I."/>
            <person name="Nassif X."/>
            <person name="Oztas S."/>
            <person name="Petit M.A."/>
            <person name="Pichon C."/>
            <person name="Rouy Z."/>
            <person name="Ruf C.S."/>
            <person name="Schneider D."/>
            <person name="Tourret J."/>
            <person name="Vacherie B."/>
            <person name="Vallenet D."/>
            <person name="Medigue C."/>
            <person name="Rocha E.P.C."/>
            <person name="Denamur E."/>
        </authorList>
    </citation>
    <scope>NUCLEOTIDE SEQUENCE [LARGE SCALE GENOMIC DNA]</scope>
    <source>
        <strain>ED1a</strain>
    </source>
</reference>
<dbReference type="EMBL" id="CU928162">
    <property type="protein sequence ID" value="CAR09986.2"/>
    <property type="molecule type" value="Genomic_DNA"/>
</dbReference>
<dbReference type="RefSeq" id="WP_000271401.1">
    <property type="nucleotide sequence ID" value="NC_011745.1"/>
</dbReference>
<dbReference type="SMR" id="B7N0W8"/>
<dbReference type="GeneID" id="93778795"/>
<dbReference type="KEGG" id="ecq:ECED1_3844"/>
<dbReference type="HOGENOM" id="CLU_061463_3_3_6"/>
<dbReference type="Proteomes" id="UP000000748">
    <property type="component" value="Chromosome"/>
</dbReference>
<dbReference type="GO" id="GO:0005737">
    <property type="term" value="C:cytoplasm"/>
    <property type="evidence" value="ECO:0007669"/>
    <property type="project" value="UniProtKB-ARBA"/>
</dbReference>
<dbReference type="GO" id="GO:1990904">
    <property type="term" value="C:ribonucleoprotein complex"/>
    <property type="evidence" value="ECO:0007669"/>
    <property type="project" value="UniProtKB-KW"/>
</dbReference>
<dbReference type="GO" id="GO:0005840">
    <property type="term" value="C:ribosome"/>
    <property type="evidence" value="ECO:0007669"/>
    <property type="project" value="UniProtKB-KW"/>
</dbReference>
<dbReference type="GO" id="GO:0019843">
    <property type="term" value="F:rRNA binding"/>
    <property type="evidence" value="ECO:0007669"/>
    <property type="project" value="UniProtKB-UniRule"/>
</dbReference>
<dbReference type="GO" id="GO:0003735">
    <property type="term" value="F:structural constituent of ribosome"/>
    <property type="evidence" value="ECO:0007669"/>
    <property type="project" value="InterPro"/>
</dbReference>
<dbReference type="GO" id="GO:0006412">
    <property type="term" value="P:translation"/>
    <property type="evidence" value="ECO:0007669"/>
    <property type="project" value="UniProtKB-UniRule"/>
</dbReference>
<dbReference type="HAMAP" id="MF_01363">
    <property type="entry name" value="Ribosomal_bL21"/>
    <property type="match status" value="1"/>
</dbReference>
<dbReference type="InterPro" id="IPR028909">
    <property type="entry name" value="bL21-like"/>
</dbReference>
<dbReference type="InterPro" id="IPR036164">
    <property type="entry name" value="bL21-like_sf"/>
</dbReference>
<dbReference type="InterPro" id="IPR001787">
    <property type="entry name" value="Ribosomal_bL21"/>
</dbReference>
<dbReference type="InterPro" id="IPR018258">
    <property type="entry name" value="Ribosomal_bL21_CS"/>
</dbReference>
<dbReference type="NCBIfam" id="TIGR00061">
    <property type="entry name" value="L21"/>
    <property type="match status" value="1"/>
</dbReference>
<dbReference type="PANTHER" id="PTHR21349">
    <property type="entry name" value="50S RIBOSOMAL PROTEIN L21"/>
    <property type="match status" value="1"/>
</dbReference>
<dbReference type="PANTHER" id="PTHR21349:SF0">
    <property type="entry name" value="LARGE RIBOSOMAL SUBUNIT PROTEIN BL21M"/>
    <property type="match status" value="1"/>
</dbReference>
<dbReference type="Pfam" id="PF00829">
    <property type="entry name" value="Ribosomal_L21p"/>
    <property type="match status" value="1"/>
</dbReference>
<dbReference type="SUPFAM" id="SSF141091">
    <property type="entry name" value="L21p-like"/>
    <property type="match status" value="1"/>
</dbReference>
<dbReference type="PROSITE" id="PS01169">
    <property type="entry name" value="RIBOSOMAL_L21"/>
    <property type="match status" value="1"/>
</dbReference>
<organism>
    <name type="scientific">Escherichia coli O81 (strain ED1a)</name>
    <dbReference type="NCBI Taxonomy" id="585397"/>
    <lineage>
        <taxon>Bacteria</taxon>
        <taxon>Pseudomonadati</taxon>
        <taxon>Pseudomonadota</taxon>
        <taxon>Gammaproteobacteria</taxon>
        <taxon>Enterobacterales</taxon>
        <taxon>Enterobacteriaceae</taxon>
        <taxon>Escherichia</taxon>
    </lineage>
</organism>
<keyword id="KW-0687">Ribonucleoprotein</keyword>
<keyword id="KW-0689">Ribosomal protein</keyword>
<keyword id="KW-0694">RNA-binding</keyword>
<keyword id="KW-0699">rRNA-binding</keyword>
<protein>
    <recommendedName>
        <fullName evidence="1">Large ribosomal subunit protein bL21</fullName>
    </recommendedName>
    <alternativeName>
        <fullName evidence="2">50S ribosomal protein L21</fullName>
    </alternativeName>
</protein>
<accession>B7N0W8</accession>
<sequence>MYAVFQSGGKQHRVSEGQTVRLEKLDIATGETVEFAEVLMIANGEEVKIGVPFVDGGVIKAEVVAHGRGEKVKIVKFRRRKHYRKQQGHRQWFTDVKITGISA</sequence>
<proteinExistence type="inferred from homology"/>
<name>RL21_ECO81</name>
<gene>
    <name evidence="1" type="primary">rplU</name>
    <name type="ordered locus">ECED1_3844</name>
</gene>
<feature type="chain" id="PRO_1000166723" description="Large ribosomal subunit protein bL21">
    <location>
        <begin position="1"/>
        <end position="103"/>
    </location>
</feature>